<dbReference type="EMBL" id="CU928164">
    <property type="protein sequence ID" value="CAR17606.1"/>
    <property type="molecule type" value="Genomic_DNA"/>
</dbReference>
<dbReference type="RefSeq" id="WP_001445899.1">
    <property type="nucleotide sequence ID" value="NC_011750.1"/>
</dbReference>
<dbReference type="RefSeq" id="YP_002407478.1">
    <property type="nucleotide sequence ID" value="NC_011750.1"/>
</dbReference>
<dbReference type="KEGG" id="ect:ECIAI39_1473"/>
<dbReference type="PATRIC" id="fig|585057.6.peg.1539"/>
<dbReference type="HOGENOM" id="CLU_1174761_0_0_6"/>
<dbReference type="Proteomes" id="UP000000749">
    <property type="component" value="Chromosome"/>
</dbReference>
<dbReference type="GO" id="GO:0005886">
    <property type="term" value="C:plasma membrane"/>
    <property type="evidence" value="ECO:0007669"/>
    <property type="project" value="UniProtKB-SubCell"/>
</dbReference>
<dbReference type="HAMAP" id="MF_01065">
    <property type="entry name" value="UPF0257"/>
    <property type="match status" value="1"/>
</dbReference>
<dbReference type="InterPro" id="IPR010646">
    <property type="entry name" value="UPF0257"/>
</dbReference>
<dbReference type="NCBIfam" id="NF002798">
    <property type="entry name" value="PRK02939.1"/>
    <property type="match status" value="1"/>
</dbReference>
<dbReference type="Pfam" id="PF06788">
    <property type="entry name" value="UPF0257"/>
    <property type="match status" value="1"/>
</dbReference>
<dbReference type="PROSITE" id="PS51257">
    <property type="entry name" value="PROKAR_LIPOPROTEIN"/>
    <property type="match status" value="1"/>
</dbReference>
<evidence type="ECO:0000255" key="1">
    <source>
        <dbReference type="HAMAP-Rule" id="MF_01065"/>
    </source>
</evidence>
<reference key="1">
    <citation type="journal article" date="2009" name="PLoS Genet.">
        <title>Organised genome dynamics in the Escherichia coli species results in highly diverse adaptive paths.</title>
        <authorList>
            <person name="Touchon M."/>
            <person name="Hoede C."/>
            <person name="Tenaillon O."/>
            <person name="Barbe V."/>
            <person name="Baeriswyl S."/>
            <person name="Bidet P."/>
            <person name="Bingen E."/>
            <person name="Bonacorsi S."/>
            <person name="Bouchier C."/>
            <person name="Bouvet O."/>
            <person name="Calteau A."/>
            <person name="Chiapello H."/>
            <person name="Clermont O."/>
            <person name="Cruveiller S."/>
            <person name="Danchin A."/>
            <person name="Diard M."/>
            <person name="Dossat C."/>
            <person name="Karoui M.E."/>
            <person name="Frapy E."/>
            <person name="Garry L."/>
            <person name="Ghigo J.M."/>
            <person name="Gilles A.M."/>
            <person name="Johnson J."/>
            <person name="Le Bouguenec C."/>
            <person name="Lescat M."/>
            <person name="Mangenot S."/>
            <person name="Martinez-Jehanne V."/>
            <person name="Matic I."/>
            <person name="Nassif X."/>
            <person name="Oztas S."/>
            <person name="Petit M.A."/>
            <person name="Pichon C."/>
            <person name="Rouy Z."/>
            <person name="Ruf C.S."/>
            <person name="Schneider D."/>
            <person name="Tourret J."/>
            <person name="Vacherie B."/>
            <person name="Vallenet D."/>
            <person name="Medigue C."/>
            <person name="Rocha E.P.C."/>
            <person name="Denamur E."/>
        </authorList>
    </citation>
    <scope>NUCLEOTIDE SEQUENCE [LARGE SCALE GENOMIC DNA]</scope>
    <source>
        <strain>IAI39 / ExPEC</strain>
    </source>
</reference>
<protein>
    <recommendedName>
        <fullName evidence="1">UPF0257 lipoprotein YnfC</fullName>
    </recommendedName>
</protein>
<feature type="signal peptide" evidence="1">
    <location>
        <begin position="1"/>
        <end position="16"/>
    </location>
</feature>
<feature type="chain" id="PRO_1000136552" description="UPF0257 lipoprotein YnfC">
    <location>
        <begin position="17"/>
        <end position="236"/>
    </location>
</feature>
<feature type="lipid moiety-binding region" description="N-palmitoyl cysteine" evidence="1">
    <location>
        <position position="17"/>
    </location>
</feature>
<feature type="lipid moiety-binding region" description="S-diacylglycerol cysteine" evidence="1">
    <location>
        <position position="17"/>
    </location>
</feature>
<comment type="subcellular location">
    <subcellularLocation>
        <location evidence="1">Cell membrane</location>
        <topology evidence="1">Lipid-anchor</topology>
    </subcellularLocation>
</comment>
<comment type="similarity">
    <text evidence="1">Belongs to the UPF0257 family.</text>
</comment>
<sequence>MKYKLLPCLLAIFLTGCDRTEVTLSFTPEMASFSNEFDFDPLRGPVKDFTQTLMDEQGEVTKRVSGTLSEEGCFDSLELLDLENNTVVALVLDANYYRDAQTLEKRVRLQGKCQLAELPSAGVSWETDDNGFVIKASSKQMQMEYRYDDQGYPLGKTTKSNDKTLSVSATPSTDPIKKLDYTAVTLLNNQRVGNVKQSCEYDSHANPVDCQLIIVDEGVKPAVERVYTIKNTIDYY</sequence>
<gene>
    <name evidence="1" type="primary">ynfC</name>
    <name type="ordered locus">ECIAI39_1473</name>
</gene>
<keyword id="KW-1003">Cell membrane</keyword>
<keyword id="KW-0449">Lipoprotein</keyword>
<keyword id="KW-0472">Membrane</keyword>
<keyword id="KW-0564">Palmitate</keyword>
<keyword id="KW-0732">Signal</keyword>
<name>YNFC_ECO7I</name>
<accession>B7NUQ4</accession>
<organism>
    <name type="scientific">Escherichia coli O7:K1 (strain IAI39 / ExPEC)</name>
    <dbReference type="NCBI Taxonomy" id="585057"/>
    <lineage>
        <taxon>Bacteria</taxon>
        <taxon>Pseudomonadati</taxon>
        <taxon>Pseudomonadota</taxon>
        <taxon>Gammaproteobacteria</taxon>
        <taxon>Enterobacterales</taxon>
        <taxon>Enterobacteriaceae</taxon>
        <taxon>Escherichia</taxon>
    </lineage>
</organism>
<proteinExistence type="inferred from homology"/>